<name>PFKA_TRYBB</name>
<comment type="function">
    <text evidence="1">Catalyzes the phosphorylation of D-fructose 6-phosphate to fructose 1,6-bisphosphate by ATP, the first committing step of glycolysis.</text>
</comment>
<comment type="catalytic activity">
    <reaction evidence="1 4">
        <text>beta-D-fructose 6-phosphate + ATP = beta-D-fructose 1,6-bisphosphate + ADP + H(+)</text>
        <dbReference type="Rhea" id="RHEA:16109"/>
        <dbReference type="ChEBI" id="CHEBI:15378"/>
        <dbReference type="ChEBI" id="CHEBI:30616"/>
        <dbReference type="ChEBI" id="CHEBI:32966"/>
        <dbReference type="ChEBI" id="CHEBI:57634"/>
        <dbReference type="ChEBI" id="CHEBI:456216"/>
        <dbReference type="EC" id="2.7.1.11"/>
    </reaction>
</comment>
<comment type="cofactor">
    <cofactor evidence="1">
        <name>Mg(2+)</name>
        <dbReference type="ChEBI" id="CHEBI:18420"/>
    </cofactor>
</comment>
<comment type="activity regulation">
    <text evidence="1">Allosterically activated by AMP.</text>
</comment>
<comment type="pathway">
    <text evidence="1">Carbohydrate degradation; glycolysis; D-glyceraldehyde 3-phosphate and glycerone phosphate from D-glucose: step 3/4.</text>
</comment>
<comment type="subunit">
    <text evidence="1 2 3">Homotetramer.</text>
</comment>
<comment type="subcellular location">
    <subcellularLocation>
        <location evidence="1 3">Glycosome</location>
    </subcellularLocation>
</comment>
<comment type="similarity">
    <text evidence="1">Belongs to the phosphofructokinase type A (PFKA) family. PPi-dependent PFK group II subfamily. Atypical ATP-dependent clade 'X' sub-subfamily.</text>
</comment>
<organism>
    <name type="scientific">Trypanosoma brucei brucei</name>
    <dbReference type="NCBI Taxonomy" id="5702"/>
    <lineage>
        <taxon>Eukaryota</taxon>
        <taxon>Discoba</taxon>
        <taxon>Euglenozoa</taxon>
        <taxon>Kinetoplastea</taxon>
        <taxon>Metakinetoplastina</taxon>
        <taxon>Trypanosomatida</taxon>
        <taxon>Trypanosomatidae</taxon>
        <taxon>Trypanosoma</taxon>
    </lineage>
</organism>
<evidence type="ECO:0000255" key="1">
    <source>
        <dbReference type="HAMAP-Rule" id="MF_03186"/>
    </source>
</evidence>
<evidence type="ECO:0000269" key="2">
    <source>
    </source>
</evidence>
<evidence type="ECO:0000269" key="3">
    <source>
    </source>
</evidence>
<evidence type="ECO:0000269" key="4">
    <source>
    </source>
</evidence>
<evidence type="ECO:0007829" key="5">
    <source>
        <dbReference type="PDB" id="2HIG"/>
    </source>
</evidence>
<evidence type="ECO:0007829" key="6">
    <source>
        <dbReference type="PDB" id="3F5M"/>
    </source>
</evidence>
<evidence type="ECO:0007829" key="7">
    <source>
        <dbReference type="PDB" id="6QU3"/>
    </source>
</evidence>
<evidence type="ECO:0007829" key="8">
    <source>
        <dbReference type="PDB" id="6QU5"/>
    </source>
</evidence>
<sequence>MAVESRSRVTSKLVKAHRAMLNSVTQEDLKVDRLPGADYPNPSKKYSSRTEFRDKTDYIMYNPRPRDEPSSENPVSVSPLLCELAAARSRIHFNPTETTIGIVTCGGICPGLNDVIRSITLTGINVYNVKRVIGFRFGYWGLSKKGSQTAIELHRGRVTNIHHYGGTILGSSRGPQDPKEMVDTLERLGVNILFTVGGDGTQRGALVISQEAKRRGVDISVFGVPKTIDNDLSFSHRTFGFQTAVEKAVQAIRAAYAEAVSANYGVGVVKLMGRDSGFIAAQAAVASAQANICLVPENPISEQEVMSLLERRFCHSRSCVIIVAEGFGQDWGRGSGGYDASGNKKLIDIGVILTEKVKAFLKANKSRYPDSTVKYIDPSYMIRACPPSANDALFCATLATLAVHEAMAGATGCIIAMRHNNYILVPIKVATSVRRVLDLRGQLWRQVREITVDLGSDVRLARKLEIRRELEAINRNRDRLHEELAKL</sequence>
<proteinExistence type="evidence at protein level"/>
<feature type="chain" id="PRO_0000429723" description="ATP-dependent 6-phosphofructokinase">
    <location>
        <begin position="1"/>
        <end position="487"/>
    </location>
</feature>
<feature type="short sequence motif" description="Peroxisomal targeting signal" evidence="1">
    <location>
        <begin position="485"/>
        <end position="487"/>
    </location>
</feature>
<feature type="active site" description="Proton acceptor" evidence="1">
    <location>
        <position position="229"/>
    </location>
</feature>
<feature type="binding site" evidence="1 2">
    <location>
        <position position="107"/>
    </location>
    <ligand>
        <name>ATP</name>
        <dbReference type="ChEBI" id="CHEBI:30616"/>
    </ligand>
</feature>
<feature type="binding site" evidence="1 2">
    <location>
        <begin position="173"/>
        <end position="174"/>
    </location>
    <ligand>
        <name>ATP</name>
        <dbReference type="ChEBI" id="CHEBI:30616"/>
    </ligand>
</feature>
<feature type="binding site" evidence="1 2">
    <location>
        <begin position="198"/>
        <end position="201"/>
    </location>
    <ligand>
        <name>ATP</name>
        <dbReference type="ChEBI" id="CHEBI:30616"/>
    </ligand>
</feature>
<feature type="binding site" evidence="1">
    <location>
        <position position="199"/>
    </location>
    <ligand>
        <name>Mg(2+)</name>
        <dbReference type="ChEBI" id="CHEBI:18420"/>
        <note>catalytic</note>
    </ligand>
</feature>
<feature type="binding site" evidence="2">
    <location>
        <position position="226"/>
    </location>
    <ligand>
        <name>ATP</name>
        <dbReference type="ChEBI" id="CHEBI:30616"/>
    </ligand>
</feature>
<feature type="binding site" evidence="1">
    <location>
        <begin position="227"/>
        <end position="229"/>
    </location>
    <ligand>
        <name>substrate</name>
    </ligand>
</feature>
<feature type="binding site" evidence="1">
    <location>
        <begin position="272"/>
        <end position="274"/>
    </location>
    <ligand>
        <name>substrate</name>
    </ligand>
</feature>
<feature type="binding site" evidence="1">
    <location>
        <position position="325"/>
    </location>
    <ligand>
        <name>substrate</name>
    </ligand>
</feature>
<feature type="binding site" evidence="1 2">
    <location>
        <begin position="341"/>
        <end position="343"/>
    </location>
    <ligand>
        <name>ATP</name>
        <dbReference type="ChEBI" id="CHEBI:30616"/>
    </ligand>
</feature>
<feature type="binding site" evidence="1">
    <location>
        <begin position="380"/>
        <end position="383"/>
    </location>
    <ligand>
        <name>substrate</name>
    </ligand>
</feature>
<feature type="site" description="Important for substrate specificity; cannot use PPi as phosphoryl donor" evidence="1">
    <location>
        <position position="200"/>
    </location>
</feature>
<feature type="strand" evidence="5">
    <location>
        <begin position="11"/>
        <end position="15"/>
    </location>
</feature>
<feature type="helix" evidence="7">
    <location>
        <begin position="26"/>
        <end position="29"/>
    </location>
</feature>
<feature type="helix" evidence="6">
    <location>
        <begin position="42"/>
        <end position="44"/>
    </location>
</feature>
<feature type="helix" evidence="7">
    <location>
        <begin position="46"/>
        <end position="48"/>
    </location>
</feature>
<feature type="strand" evidence="7">
    <location>
        <begin position="49"/>
        <end position="52"/>
    </location>
</feature>
<feature type="strand" evidence="7">
    <location>
        <begin position="58"/>
        <end position="61"/>
    </location>
</feature>
<feature type="strand" evidence="7">
    <location>
        <begin position="65"/>
        <end position="69"/>
    </location>
</feature>
<feature type="strand" evidence="7">
    <location>
        <begin position="75"/>
        <end position="78"/>
    </location>
</feature>
<feature type="strand" evidence="7">
    <location>
        <begin position="81"/>
        <end position="84"/>
    </location>
</feature>
<feature type="strand" evidence="7">
    <location>
        <begin position="89"/>
        <end position="93"/>
    </location>
</feature>
<feature type="helix" evidence="7">
    <location>
        <begin position="95"/>
        <end position="97"/>
    </location>
</feature>
<feature type="strand" evidence="7">
    <location>
        <begin position="99"/>
        <end position="104"/>
    </location>
</feature>
<feature type="helix" evidence="7">
    <location>
        <begin position="112"/>
        <end position="125"/>
    </location>
</feature>
<feature type="strand" evidence="7">
    <location>
        <begin position="130"/>
        <end position="134"/>
    </location>
</feature>
<feature type="helix" evidence="7">
    <location>
        <begin position="138"/>
        <end position="142"/>
    </location>
</feature>
<feature type="helix" evidence="7">
    <location>
        <begin position="146"/>
        <end position="149"/>
    </location>
</feature>
<feature type="strand" evidence="5">
    <location>
        <begin position="151"/>
        <end position="153"/>
    </location>
</feature>
<feature type="helix" evidence="7">
    <location>
        <begin position="155"/>
        <end position="158"/>
    </location>
</feature>
<feature type="helix" evidence="7">
    <location>
        <begin position="161"/>
        <end position="163"/>
    </location>
</feature>
<feature type="strand" evidence="7">
    <location>
        <begin position="164"/>
        <end position="166"/>
    </location>
</feature>
<feature type="helix" evidence="7">
    <location>
        <begin position="178"/>
        <end position="188"/>
    </location>
</feature>
<feature type="strand" evidence="7">
    <location>
        <begin position="191"/>
        <end position="197"/>
    </location>
</feature>
<feature type="helix" evidence="7">
    <location>
        <begin position="199"/>
        <end position="214"/>
    </location>
</feature>
<feature type="strand" evidence="7">
    <location>
        <begin position="220"/>
        <end position="225"/>
    </location>
</feature>
<feature type="helix" evidence="7">
    <location>
        <begin position="241"/>
        <end position="260"/>
    </location>
</feature>
<feature type="strand" evidence="7">
    <location>
        <begin position="265"/>
        <end position="270"/>
    </location>
</feature>
<feature type="helix" evidence="7">
    <location>
        <begin position="278"/>
        <end position="287"/>
    </location>
</feature>
<feature type="strand" evidence="7">
    <location>
        <begin position="291"/>
        <end position="294"/>
    </location>
</feature>
<feature type="helix" evidence="7">
    <location>
        <begin position="302"/>
        <end position="315"/>
    </location>
</feature>
<feature type="strand" evidence="7">
    <location>
        <begin position="317"/>
        <end position="323"/>
    </location>
</feature>
<feature type="turn" evidence="5">
    <location>
        <begin position="325"/>
        <end position="328"/>
    </location>
</feature>
<feature type="helix" evidence="5">
    <location>
        <begin position="329"/>
        <end position="331"/>
    </location>
</feature>
<feature type="strand" evidence="8">
    <location>
        <begin position="341"/>
        <end position="343"/>
    </location>
</feature>
<feature type="helix" evidence="7">
    <location>
        <begin position="349"/>
        <end position="363"/>
    </location>
</feature>
<feature type="turn" evidence="7">
    <location>
        <begin position="364"/>
        <end position="367"/>
    </location>
</feature>
<feature type="strand" evidence="7">
    <location>
        <begin position="368"/>
        <end position="370"/>
    </location>
</feature>
<feature type="strand" evidence="7">
    <location>
        <begin position="372"/>
        <end position="376"/>
    </location>
</feature>
<feature type="helix" evidence="7">
    <location>
        <begin position="379"/>
        <end position="383"/>
    </location>
</feature>
<feature type="helix" evidence="7">
    <location>
        <begin position="389"/>
        <end position="407"/>
    </location>
</feature>
<feature type="strand" evidence="7">
    <location>
        <begin position="412"/>
        <end position="418"/>
    </location>
</feature>
<feature type="strand" evidence="7">
    <location>
        <begin position="421"/>
        <end position="426"/>
    </location>
</feature>
<feature type="helix" evidence="7">
    <location>
        <begin position="427"/>
        <end position="430"/>
    </location>
</feature>
<feature type="strand" evidence="5">
    <location>
        <begin position="433"/>
        <end position="437"/>
    </location>
</feature>
<feature type="helix" evidence="7">
    <location>
        <begin position="442"/>
        <end position="450"/>
    </location>
</feature>
<feature type="strand" evidence="6">
    <location>
        <begin position="454"/>
        <end position="456"/>
    </location>
</feature>
<feature type="helix" evidence="7">
    <location>
        <begin position="458"/>
        <end position="485"/>
    </location>
</feature>
<reference key="1">
    <citation type="journal article" date="1997" name="Eur. J. Biochem.">
        <title>The glycosomal ATP-dependent phosphofructokinase of Trypanosoma brucei must have evolved from an ancestral pyrophosphate-dependent enzyme.</title>
        <authorList>
            <person name="Michels P.A."/>
            <person name="Chevalier N."/>
            <person name="Opperdoes F.R."/>
            <person name="Rider M.H."/>
            <person name="Rigden D.J."/>
        </authorList>
    </citation>
    <scope>NUCLEOTIDE SEQUENCE [GENOMIC DNA]</scope>
    <scope>PROTEIN SEQUENCE OF 13-24; 55-64; 240-247 AND 375-382</scope>
    <scope>CATALYTIC ACTIVITY</scope>
    <source>
        <strain>427</strain>
    </source>
</reference>
<reference key="2">
    <citation type="journal article" date="1986" name="Eur. J. Biochem.">
        <title>Glycolytic enzymes of Trypanosoma brucei. Simultaneous purification, intraglycosomal concentrations and physical properties.</title>
        <authorList>
            <person name="Misset O."/>
            <person name="Bos O.J."/>
            <person name="Opperdoes F.R."/>
        </authorList>
    </citation>
    <scope>SUBUNIT</scope>
    <scope>SUBCELLULAR LOCATION</scope>
    <source>
        <strain>427</strain>
    </source>
</reference>
<reference key="3">
    <citation type="journal article" date="2007" name="J. Mol. Biol.">
        <title>The first crystal structure of phosphofructokinase from a eukaryote: Trypanosoma brucei.</title>
        <authorList>
            <person name="Martinez-Oyanedel J."/>
            <person name="McNae I.W."/>
            <person name="Nowicki M.W."/>
            <person name="Keillor J.W."/>
            <person name="Michels P.A."/>
            <person name="Fothergill-Gilmore L.A."/>
            <person name="Walkinshaw M.D."/>
        </authorList>
    </citation>
    <scope>X-RAY CRYSTALLOGRAPHY (2.40 ANGSTROMS)</scope>
    <source>
        <strain>427</strain>
    </source>
</reference>
<reference key="4">
    <citation type="journal article" date="2008" name="J. Mol. Biol.">
        <title>Structural insights into the recognition of peroxisomal targeting signal 1 by Trypanosoma brucei peroxin 5.</title>
        <authorList>
            <person name="Sampathkumar P."/>
            <person name="Roach C."/>
            <person name="Michels P.A."/>
            <person name="Hol W.G."/>
        </authorList>
    </citation>
    <scope>X-RAY CRYSTALLOGRAPHY (2.15 ANGSTROMS) OF 481-487</scope>
    <source>
        <strain>427</strain>
    </source>
</reference>
<reference key="5">
    <citation type="journal article" date="2009" name="J. Mol. Biol.">
        <title>The crystal structure of ATP-bound phosphofructokinase from Trypanosoma brucei reveals conformational transitions different from those of other phosphofructokinases.</title>
        <authorList>
            <person name="McNae I.W."/>
            <person name="Martinez-Oyanedel J."/>
            <person name="Keillor J.W."/>
            <person name="Michels P.A."/>
            <person name="Fothergill-Gilmore L.A."/>
            <person name="Walkinshaw M.D."/>
        </authorList>
    </citation>
    <scope>X-RAY CRYSTALLOGRAPHY (2.70 ANGSTROMS) IN COMPLEX WITH ATP</scope>
    <source>
        <strain>427</strain>
    </source>
</reference>
<protein>
    <recommendedName>
        <fullName evidence="1">ATP-dependent 6-phosphofructokinase</fullName>
        <shortName evidence="1">ATP-PFK</shortName>
        <shortName evidence="1">Phosphofructokinase</shortName>
        <ecNumber evidence="1">2.7.1.11</ecNumber>
    </recommendedName>
    <alternativeName>
        <fullName evidence="1">Phosphohexokinase</fullName>
    </alternativeName>
</protein>
<accession>O15648</accession>
<keyword id="KW-0002">3D-structure</keyword>
<keyword id="KW-0021">Allosteric enzyme</keyword>
<keyword id="KW-0067">ATP-binding</keyword>
<keyword id="KW-0903">Direct protein sequencing</keyword>
<keyword id="KW-0324">Glycolysis</keyword>
<keyword id="KW-0327">Glycosome</keyword>
<keyword id="KW-0418">Kinase</keyword>
<keyword id="KW-0460">Magnesium</keyword>
<keyword id="KW-0479">Metal-binding</keyword>
<keyword id="KW-0547">Nucleotide-binding</keyword>
<keyword id="KW-0576">Peroxisome</keyword>
<keyword id="KW-0808">Transferase</keyword>
<gene>
    <name evidence="1" type="primary">pfk</name>
</gene>
<dbReference type="EC" id="2.7.1.11" evidence="1"/>
<dbReference type="EMBL" id="AF008186">
    <property type="protein sequence ID" value="AAC47836.1"/>
    <property type="molecule type" value="Genomic_DNA"/>
</dbReference>
<dbReference type="PDB" id="2HIG">
    <property type="method" value="X-ray"/>
    <property type="resolution" value="2.40 A"/>
    <property type="chains" value="A/B=1-487"/>
</dbReference>
<dbReference type="PDB" id="3CVL">
    <property type="method" value="X-ray"/>
    <property type="resolution" value="2.15 A"/>
    <property type="chains" value="B=481-487"/>
</dbReference>
<dbReference type="PDB" id="3F5M">
    <property type="method" value="X-ray"/>
    <property type="resolution" value="2.70 A"/>
    <property type="chains" value="A/B/C/D=1-487"/>
</dbReference>
<dbReference type="PDB" id="6QU3">
    <property type="method" value="X-ray"/>
    <property type="resolution" value="2.35 A"/>
    <property type="chains" value="A/B/C/D=1-487"/>
</dbReference>
<dbReference type="PDB" id="6QU4">
    <property type="method" value="X-ray"/>
    <property type="resolution" value="2.75 A"/>
    <property type="chains" value="A/B/C/D=1-487"/>
</dbReference>
<dbReference type="PDB" id="6QU5">
    <property type="method" value="X-ray"/>
    <property type="resolution" value="3.40 A"/>
    <property type="chains" value="A/B/C/D/E/F/G/H=1-487"/>
</dbReference>
<dbReference type="PDB" id="6SY7">
    <property type="method" value="X-ray"/>
    <property type="resolution" value="2.75 A"/>
    <property type="chains" value="A/B/C/D/E/F/G/H=1-487"/>
</dbReference>
<dbReference type="PDBsum" id="2HIG"/>
<dbReference type="PDBsum" id="3CVL"/>
<dbReference type="PDBsum" id="3F5M"/>
<dbReference type="PDBsum" id="6QU3"/>
<dbReference type="PDBsum" id="6QU4"/>
<dbReference type="PDBsum" id="6QU5"/>
<dbReference type="PDBsum" id="6SY7"/>
<dbReference type="SMR" id="O15648"/>
<dbReference type="BindingDB" id="O15648"/>
<dbReference type="ChEMBL" id="CHEMBL5686"/>
<dbReference type="DrugCentral" id="O15648"/>
<dbReference type="OMA" id="SRIHFRG"/>
<dbReference type="BRENDA" id="2.7.1.11">
    <property type="organism ID" value="6520"/>
</dbReference>
<dbReference type="SABIO-RK" id="O15648"/>
<dbReference type="UniPathway" id="UPA00109">
    <property type="reaction ID" value="UER00182"/>
</dbReference>
<dbReference type="EvolutionaryTrace" id="O15648"/>
<dbReference type="GO" id="GO:0020015">
    <property type="term" value="C:glycosome"/>
    <property type="evidence" value="ECO:0000314"/>
    <property type="project" value="GeneDB"/>
</dbReference>
<dbReference type="GO" id="GO:0003872">
    <property type="term" value="F:6-phosphofructokinase activity"/>
    <property type="evidence" value="ECO:0000304"/>
    <property type="project" value="GeneDB"/>
</dbReference>
<dbReference type="GO" id="GO:0005524">
    <property type="term" value="F:ATP binding"/>
    <property type="evidence" value="ECO:0000314"/>
    <property type="project" value="GeneDB"/>
</dbReference>
<dbReference type="GO" id="GO:0046872">
    <property type="term" value="F:metal ion binding"/>
    <property type="evidence" value="ECO:0007669"/>
    <property type="project" value="UniProtKB-KW"/>
</dbReference>
<dbReference type="GO" id="GO:0042301">
    <property type="term" value="F:phosphate ion binding"/>
    <property type="evidence" value="ECO:0000314"/>
    <property type="project" value="GeneDB"/>
</dbReference>
<dbReference type="GO" id="GO:0006002">
    <property type="term" value="P:fructose 6-phosphate metabolic process"/>
    <property type="evidence" value="ECO:0007669"/>
    <property type="project" value="InterPro"/>
</dbReference>
<dbReference type="GO" id="GO:0006096">
    <property type="term" value="P:glycolytic process"/>
    <property type="evidence" value="ECO:0000305"/>
    <property type="project" value="GeneDB"/>
</dbReference>
<dbReference type="FunFam" id="3.40.50.450:FF:000002">
    <property type="entry name" value="ATP-dependent 6-phosphofructokinase"/>
    <property type="match status" value="1"/>
</dbReference>
<dbReference type="Gene3D" id="3.40.50.450">
    <property type="match status" value="2"/>
</dbReference>
<dbReference type="HAMAP" id="MF_01981">
    <property type="entry name" value="Phosphofructokinase_II_X"/>
    <property type="match status" value="1"/>
</dbReference>
<dbReference type="InterPro" id="IPR022953">
    <property type="entry name" value="ATP_PFK"/>
</dbReference>
<dbReference type="InterPro" id="IPR050929">
    <property type="entry name" value="PFKA"/>
</dbReference>
<dbReference type="InterPro" id="IPR000023">
    <property type="entry name" value="Phosphofructokinase_dom"/>
</dbReference>
<dbReference type="InterPro" id="IPR035966">
    <property type="entry name" value="PKF_sf"/>
</dbReference>
<dbReference type="InterPro" id="IPR012004">
    <property type="entry name" value="PyroP-dep_PFK_TP0108"/>
</dbReference>
<dbReference type="NCBIfam" id="NF005301">
    <property type="entry name" value="PRK06830.1"/>
    <property type="match status" value="1"/>
</dbReference>
<dbReference type="PANTHER" id="PTHR45770">
    <property type="entry name" value="ATP-DEPENDENT 6-PHOSPHOFRUCTOKINASE 1"/>
    <property type="match status" value="1"/>
</dbReference>
<dbReference type="Pfam" id="PF00365">
    <property type="entry name" value="PFK"/>
    <property type="match status" value="1"/>
</dbReference>
<dbReference type="PIRSF" id="PIRSF000534">
    <property type="entry name" value="PPi_PFK_TP0108"/>
    <property type="match status" value="1"/>
</dbReference>
<dbReference type="PRINTS" id="PR00476">
    <property type="entry name" value="PHFRCTKINASE"/>
</dbReference>
<dbReference type="SUPFAM" id="SSF53784">
    <property type="entry name" value="Phosphofructokinase"/>
    <property type="match status" value="1"/>
</dbReference>